<accession>Q7U8E8</accession>
<name>QUEA_PARMW</name>
<feature type="chain" id="PRO_0000165456" description="S-adenosylmethionine:tRNA ribosyltransferase-isomerase">
    <location>
        <begin position="1"/>
        <end position="366"/>
    </location>
</feature>
<keyword id="KW-0963">Cytoplasm</keyword>
<keyword id="KW-0671">Queuosine biosynthesis</keyword>
<keyword id="KW-0949">S-adenosyl-L-methionine</keyword>
<keyword id="KW-0808">Transferase</keyword>
<dbReference type="EC" id="2.4.99.17" evidence="1"/>
<dbReference type="EMBL" id="BX569690">
    <property type="protein sequence ID" value="CAE07187.1"/>
    <property type="molecule type" value="Genomic_DNA"/>
</dbReference>
<dbReference type="RefSeq" id="WP_011127539.1">
    <property type="nucleotide sequence ID" value="NC_005070.1"/>
</dbReference>
<dbReference type="SMR" id="Q7U8E8"/>
<dbReference type="STRING" id="84588.SYNW0672"/>
<dbReference type="KEGG" id="syw:SYNW0672"/>
<dbReference type="eggNOG" id="COG0809">
    <property type="taxonomic scope" value="Bacteria"/>
</dbReference>
<dbReference type="HOGENOM" id="CLU_039110_1_0_3"/>
<dbReference type="UniPathway" id="UPA00392"/>
<dbReference type="Proteomes" id="UP000001422">
    <property type="component" value="Chromosome"/>
</dbReference>
<dbReference type="GO" id="GO:0005737">
    <property type="term" value="C:cytoplasm"/>
    <property type="evidence" value="ECO:0007669"/>
    <property type="project" value="UniProtKB-SubCell"/>
</dbReference>
<dbReference type="GO" id="GO:0051075">
    <property type="term" value="F:S-adenosylmethionine:tRNA ribosyltransferase-isomerase activity"/>
    <property type="evidence" value="ECO:0007669"/>
    <property type="project" value="UniProtKB-EC"/>
</dbReference>
<dbReference type="GO" id="GO:0008616">
    <property type="term" value="P:queuosine biosynthetic process"/>
    <property type="evidence" value="ECO:0007669"/>
    <property type="project" value="UniProtKB-UniRule"/>
</dbReference>
<dbReference type="GO" id="GO:0002099">
    <property type="term" value="P:tRNA wobble guanine modification"/>
    <property type="evidence" value="ECO:0007669"/>
    <property type="project" value="TreeGrafter"/>
</dbReference>
<dbReference type="Gene3D" id="2.40.10.240">
    <property type="entry name" value="QueA-like"/>
    <property type="match status" value="1"/>
</dbReference>
<dbReference type="Gene3D" id="3.40.1780.10">
    <property type="entry name" value="QueA-like"/>
    <property type="match status" value="2"/>
</dbReference>
<dbReference type="HAMAP" id="MF_00113">
    <property type="entry name" value="QueA"/>
    <property type="match status" value="1"/>
</dbReference>
<dbReference type="InterPro" id="IPR003699">
    <property type="entry name" value="QueA"/>
</dbReference>
<dbReference type="InterPro" id="IPR042118">
    <property type="entry name" value="QueA_dom1"/>
</dbReference>
<dbReference type="InterPro" id="IPR042119">
    <property type="entry name" value="QueA_dom2"/>
</dbReference>
<dbReference type="InterPro" id="IPR036100">
    <property type="entry name" value="QueA_sf"/>
</dbReference>
<dbReference type="NCBIfam" id="NF001140">
    <property type="entry name" value="PRK00147.1"/>
    <property type="match status" value="1"/>
</dbReference>
<dbReference type="NCBIfam" id="TIGR00113">
    <property type="entry name" value="queA"/>
    <property type="match status" value="1"/>
</dbReference>
<dbReference type="PANTHER" id="PTHR30307">
    <property type="entry name" value="S-ADENOSYLMETHIONINE:TRNA RIBOSYLTRANSFERASE-ISOMERASE"/>
    <property type="match status" value="1"/>
</dbReference>
<dbReference type="PANTHER" id="PTHR30307:SF0">
    <property type="entry name" value="S-ADENOSYLMETHIONINE:TRNA RIBOSYLTRANSFERASE-ISOMERASE"/>
    <property type="match status" value="1"/>
</dbReference>
<dbReference type="Pfam" id="PF02547">
    <property type="entry name" value="Queuosine_synth"/>
    <property type="match status" value="1"/>
</dbReference>
<dbReference type="SUPFAM" id="SSF111337">
    <property type="entry name" value="QueA-like"/>
    <property type="match status" value="1"/>
</dbReference>
<sequence length="366" mass="40232">MPDPRDLQLSSYDYPLPQERIAQVPAEPRHSARMLMVPPATQALEAARHGVVWDLLEELQPGDLLVVNNTRVLKARLKVRRSGGGLSELLVLEPRGEGRWLCLARPAKRMRPGDVLTIDGTSIGLTVLEDDAASGGRLVQFPTDCRDAETIETLLNQWGEVPLPPYIDRHDPDDVERYQTRYADRPGAVAAPTAGLHFSDELLAGLQLKGVELARITLHVGLGTFRPVETNDLTRLELHSEWVEVSAAVVEAIQRCRGRVIAVGTTSVRALEGAAQQNGGVLQPFTGPVNLVIQPGYRFAVVQGLMTNFHLPKSSLLLLVSALIGREKLLAIYTEAIERNYRFFSYGDAMWIAPEAVLSQAEPVGH</sequence>
<gene>
    <name evidence="1" type="primary">queA</name>
    <name type="ordered locus">SYNW0672</name>
</gene>
<evidence type="ECO:0000255" key="1">
    <source>
        <dbReference type="HAMAP-Rule" id="MF_00113"/>
    </source>
</evidence>
<reference key="1">
    <citation type="journal article" date="2003" name="Nature">
        <title>The genome of a motile marine Synechococcus.</title>
        <authorList>
            <person name="Palenik B."/>
            <person name="Brahamsha B."/>
            <person name="Larimer F.W."/>
            <person name="Land M.L."/>
            <person name="Hauser L."/>
            <person name="Chain P."/>
            <person name="Lamerdin J.E."/>
            <person name="Regala W."/>
            <person name="Allen E.E."/>
            <person name="McCarren J."/>
            <person name="Paulsen I.T."/>
            <person name="Dufresne A."/>
            <person name="Partensky F."/>
            <person name="Webb E.A."/>
            <person name="Waterbury J."/>
        </authorList>
    </citation>
    <scope>NUCLEOTIDE SEQUENCE [LARGE SCALE GENOMIC DNA]</scope>
    <source>
        <strain>WH8102</strain>
    </source>
</reference>
<protein>
    <recommendedName>
        <fullName evidence="1">S-adenosylmethionine:tRNA ribosyltransferase-isomerase</fullName>
        <ecNumber evidence="1">2.4.99.17</ecNumber>
    </recommendedName>
    <alternativeName>
        <fullName evidence="1">Queuosine biosynthesis protein QueA</fullName>
    </alternativeName>
</protein>
<proteinExistence type="inferred from homology"/>
<organism>
    <name type="scientific">Parasynechococcus marenigrum (strain WH8102)</name>
    <dbReference type="NCBI Taxonomy" id="84588"/>
    <lineage>
        <taxon>Bacteria</taxon>
        <taxon>Bacillati</taxon>
        <taxon>Cyanobacteriota</taxon>
        <taxon>Cyanophyceae</taxon>
        <taxon>Synechococcales</taxon>
        <taxon>Prochlorococcaceae</taxon>
        <taxon>Parasynechococcus</taxon>
        <taxon>Parasynechococcus marenigrum</taxon>
    </lineage>
</organism>
<comment type="function">
    <text evidence="1">Transfers and isomerizes the ribose moiety from AdoMet to the 7-aminomethyl group of 7-deazaguanine (preQ1-tRNA) to give epoxyqueuosine (oQ-tRNA).</text>
</comment>
<comment type="catalytic activity">
    <reaction evidence="1">
        <text>7-aminomethyl-7-carbaguanosine(34) in tRNA + S-adenosyl-L-methionine = epoxyqueuosine(34) in tRNA + adenine + L-methionine + 2 H(+)</text>
        <dbReference type="Rhea" id="RHEA:32155"/>
        <dbReference type="Rhea" id="RHEA-COMP:10342"/>
        <dbReference type="Rhea" id="RHEA-COMP:18582"/>
        <dbReference type="ChEBI" id="CHEBI:15378"/>
        <dbReference type="ChEBI" id="CHEBI:16708"/>
        <dbReference type="ChEBI" id="CHEBI:57844"/>
        <dbReference type="ChEBI" id="CHEBI:59789"/>
        <dbReference type="ChEBI" id="CHEBI:82833"/>
        <dbReference type="ChEBI" id="CHEBI:194443"/>
        <dbReference type="EC" id="2.4.99.17"/>
    </reaction>
</comment>
<comment type="pathway">
    <text evidence="1">tRNA modification; tRNA-queuosine biosynthesis.</text>
</comment>
<comment type="subunit">
    <text evidence="1">Monomer.</text>
</comment>
<comment type="subcellular location">
    <subcellularLocation>
        <location evidence="1">Cytoplasm</location>
    </subcellularLocation>
</comment>
<comment type="similarity">
    <text evidence="1">Belongs to the QueA family.</text>
</comment>